<gene>
    <name evidence="1" type="primary">frr</name>
    <name type="ordered locus">HY04AAS1_1250</name>
</gene>
<organism>
    <name type="scientific">Hydrogenobaculum sp. (strain Y04AAS1)</name>
    <dbReference type="NCBI Taxonomy" id="380749"/>
    <lineage>
        <taxon>Bacteria</taxon>
        <taxon>Pseudomonadati</taxon>
        <taxon>Aquificota</taxon>
        <taxon>Aquificia</taxon>
        <taxon>Aquificales</taxon>
        <taxon>Aquificaceae</taxon>
        <taxon>Hydrogenobaculum</taxon>
    </lineage>
</organism>
<proteinExistence type="inferred from homology"/>
<name>RRF_HYDS0</name>
<accession>B4U9X4</accession>
<feature type="chain" id="PRO_1000202102" description="Ribosome-recycling factor">
    <location>
        <begin position="1"/>
        <end position="182"/>
    </location>
</feature>
<reference key="1">
    <citation type="journal article" date="2009" name="J. Bacteriol.">
        <title>Complete and draft genome sequences of six members of the Aquificales.</title>
        <authorList>
            <person name="Reysenbach A.-L."/>
            <person name="Hamamura N."/>
            <person name="Podar M."/>
            <person name="Griffiths E."/>
            <person name="Ferreira S."/>
            <person name="Hochstein R."/>
            <person name="Heidelberg J."/>
            <person name="Johnson J."/>
            <person name="Mead D."/>
            <person name="Pohorille A."/>
            <person name="Sarmiento M."/>
            <person name="Schweighofer K."/>
            <person name="Seshadri R."/>
            <person name="Voytek M.A."/>
        </authorList>
    </citation>
    <scope>NUCLEOTIDE SEQUENCE [LARGE SCALE GENOMIC DNA]</scope>
    <source>
        <strain>Y04AAS1</strain>
    </source>
</reference>
<protein>
    <recommendedName>
        <fullName evidence="1">Ribosome-recycling factor</fullName>
        <shortName evidence="1">RRF</shortName>
    </recommendedName>
    <alternativeName>
        <fullName evidence="1">Ribosome-releasing factor</fullName>
    </alternativeName>
</protein>
<sequence>MIEDILEEAEESMKKSINHFKSELAGFRTGRASTSLVEDIKIEYYGSRVPIKQVGNVSVPEPNQILIQVWDQNAISPIEKAIMEQLSLNPARQGNTLRITLPPLTQERRKELVKLLHKTTEEAKVAIRNIRRDAKEMIESLEGISEDEIKRALDKLQKITDHYIDEISNLSSSKEKEITELK</sequence>
<comment type="function">
    <text evidence="1">Responsible for the release of ribosomes from messenger RNA at the termination of protein biosynthesis. May increase the efficiency of translation by recycling ribosomes from one round of translation to another.</text>
</comment>
<comment type="subcellular location">
    <subcellularLocation>
        <location evidence="1">Cytoplasm</location>
    </subcellularLocation>
</comment>
<comment type="similarity">
    <text evidence="1">Belongs to the RRF family.</text>
</comment>
<keyword id="KW-0963">Cytoplasm</keyword>
<keyword id="KW-0648">Protein biosynthesis</keyword>
<dbReference type="EMBL" id="CP001130">
    <property type="protein sequence ID" value="ACG57935.1"/>
    <property type="molecule type" value="Genomic_DNA"/>
</dbReference>
<dbReference type="RefSeq" id="WP_012514291.1">
    <property type="nucleotide sequence ID" value="NC_011126.1"/>
</dbReference>
<dbReference type="SMR" id="B4U9X4"/>
<dbReference type="STRING" id="380749.HY04AAS1_1250"/>
<dbReference type="KEGG" id="hya:HY04AAS1_1250"/>
<dbReference type="eggNOG" id="COG0233">
    <property type="taxonomic scope" value="Bacteria"/>
</dbReference>
<dbReference type="HOGENOM" id="CLU_073981_2_1_0"/>
<dbReference type="OrthoDB" id="9804006at2"/>
<dbReference type="GO" id="GO:0005737">
    <property type="term" value="C:cytoplasm"/>
    <property type="evidence" value="ECO:0007669"/>
    <property type="project" value="UniProtKB-SubCell"/>
</dbReference>
<dbReference type="GO" id="GO:0043023">
    <property type="term" value="F:ribosomal large subunit binding"/>
    <property type="evidence" value="ECO:0007669"/>
    <property type="project" value="TreeGrafter"/>
</dbReference>
<dbReference type="GO" id="GO:0006415">
    <property type="term" value="P:translational termination"/>
    <property type="evidence" value="ECO:0007669"/>
    <property type="project" value="UniProtKB-UniRule"/>
</dbReference>
<dbReference type="CDD" id="cd00520">
    <property type="entry name" value="RRF"/>
    <property type="match status" value="1"/>
</dbReference>
<dbReference type="FunFam" id="1.10.132.20:FF:000001">
    <property type="entry name" value="Ribosome-recycling factor"/>
    <property type="match status" value="1"/>
</dbReference>
<dbReference type="FunFam" id="3.30.1360.40:FF:000001">
    <property type="entry name" value="Ribosome-recycling factor"/>
    <property type="match status" value="1"/>
</dbReference>
<dbReference type="Gene3D" id="3.30.1360.40">
    <property type="match status" value="1"/>
</dbReference>
<dbReference type="Gene3D" id="1.10.132.20">
    <property type="entry name" value="Ribosome-recycling factor"/>
    <property type="match status" value="1"/>
</dbReference>
<dbReference type="HAMAP" id="MF_00040">
    <property type="entry name" value="RRF"/>
    <property type="match status" value="1"/>
</dbReference>
<dbReference type="InterPro" id="IPR002661">
    <property type="entry name" value="Ribosome_recyc_fac"/>
</dbReference>
<dbReference type="InterPro" id="IPR023584">
    <property type="entry name" value="Ribosome_recyc_fac_dom"/>
</dbReference>
<dbReference type="InterPro" id="IPR036191">
    <property type="entry name" value="RRF_sf"/>
</dbReference>
<dbReference type="NCBIfam" id="TIGR00496">
    <property type="entry name" value="frr"/>
    <property type="match status" value="1"/>
</dbReference>
<dbReference type="PANTHER" id="PTHR20982:SF3">
    <property type="entry name" value="MITOCHONDRIAL RIBOSOME RECYCLING FACTOR PSEUDO 1"/>
    <property type="match status" value="1"/>
</dbReference>
<dbReference type="PANTHER" id="PTHR20982">
    <property type="entry name" value="RIBOSOME RECYCLING FACTOR"/>
    <property type="match status" value="1"/>
</dbReference>
<dbReference type="Pfam" id="PF01765">
    <property type="entry name" value="RRF"/>
    <property type="match status" value="1"/>
</dbReference>
<dbReference type="SUPFAM" id="SSF55194">
    <property type="entry name" value="Ribosome recycling factor, RRF"/>
    <property type="match status" value="1"/>
</dbReference>
<evidence type="ECO:0000255" key="1">
    <source>
        <dbReference type="HAMAP-Rule" id="MF_00040"/>
    </source>
</evidence>